<gene>
    <name type="primary">OSR1</name>
    <name type="synonym">ODD1</name>
</gene>
<evidence type="ECO:0000250" key="1"/>
<evidence type="ECO:0000250" key="2">
    <source>
        <dbReference type="UniProtKB" id="Q9WVG7"/>
    </source>
</evidence>
<evidence type="ECO:0000255" key="3">
    <source>
        <dbReference type="PROSITE-ProRule" id="PRU00042"/>
    </source>
</evidence>
<evidence type="ECO:0000256" key="4">
    <source>
        <dbReference type="SAM" id="MobiDB-lite"/>
    </source>
</evidence>
<evidence type="ECO:0000305" key="5"/>
<dbReference type="EMBL" id="BC123591">
    <property type="protein sequence ID" value="AAI23592.1"/>
    <property type="status" value="ALT_FRAME"/>
    <property type="molecule type" value="mRNA"/>
</dbReference>
<dbReference type="RefSeq" id="NP_001070384.2">
    <property type="nucleotide sequence ID" value="NM_001076916.2"/>
</dbReference>
<dbReference type="SMR" id="Q08DS3"/>
<dbReference type="FunCoup" id="Q08DS3">
    <property type="interactions" value="186"/>
</dbReference>
<dbReference type="STRING" id="9913.ENSBTAP00000055571"/>
<dbReference type="PaxDb" id="9913-ENSBTAP00000010670"/>
<dbReference type="Ensembl" id="ENSBTAT00000066336.3">
    <property type="protein sequence ID" value="ENSBTAP00000055571.1"/>
    <property type="gene ID" value="ENSBTAG00000008113.6"/>
</dbReference>
<dbReference type="GeneID" id="539430"/>
<dbReference type="KEGG" id="bta:539430"/>
<dbReference type="CTD" id="130497"/>
<dbReference type="VEuPathDB" id="HostDB:ENSBTAG00000008113"/>
<dbReference type="VGNC" id="VGNC:32476">
    <property type="gene designation" value="OSR1"/>
</dbReference>
<dbReference type="eggNOG" id="KOG1721">
    <property type="taxonomic scope" value="Eukaryota"/>
</dbReference>
<dbReference type="GeneTree" id="ENSGT00940000158993"/>
<dbReference type="HOGENOM" id="CLU_051854_0_0_1"/>
<dbReference type="InParanoid" id="Q08DS3"/>
<dbReference type="OMA" id="CIFCKEE"/>
<dbReference type="OrthoDB" id="9451254at2759"/>
<dbReference type="TreeFam" id="TF350876"/>
<dbReference type="Proteomes" id="UP000009136">
    <property type="component" value="Chromosome 11"/>
</dbReference>
<dbReference type="Bgee" id="ENSBTAG00000008113">
    <property type="expression patterns" value="Expressed in aorta and 91 other cell types or tissues"/>
</dbReference>
<dbReference type="GO" id="GO:0005634">
    <property type="term" value="C:nucleus"/>
    <property type="evidence" value="ECO:0000250"/>
    <property type="project" value="UniProtKB"/>
</dbReference>
<dbReference type="GO" id="GO:0000981">
    <property type="term" value="F:DNA-binding transcription factor activity, RNA polymerase II-specific"/>
    <property type="evidence" value="ECO:0000318"/>
    <property type="project" value="GO_Central"/>
</dbReference>
<dbReference type="GO" id="GO:0000977">
    <property type="term" value="F:RNA polymerase II transcription regulatory region sequence-specific DNA binding"/>
    <property type="evidence" value="ECO:0000318"/>
    <property type="project" value="GO_Central"/>
</dbReference>
<dbReference type="GO" id="GO:0008270">
    <property type="term" value="F:zinc ion binding"/>
    <property type="evidence" value="ECO:0007669"/>
    <property type="project" value="UniProtKB-KW"/>
</dbReference>
<dbReference type="GO" id="GO:0072111">
    <property type="term" value="P:cell proliferation involved in kidney development"/>
    <property type="evidence" value="ECO:0000250"/>
    <property type="project" value="UniProtKB"/>
</dbReference>
<dbReference type="GO" id="GO:0071300">
    <property type="term" value="P:cellular response to retinoic acid"/>
    <property type="evidence" value="ECO:0007669"/>
    <property type="project" value="Ensembl"/>
</dbReference>
<dbReference type="GO" id="GO:0002062">
    <property type="term" value="P:chondrocyte differentiation"/>
    <property type="evidence" value="ECO:0007669"/>
    <property type="project" value="Ensembl"/>
</dbReference>
<dbReference type="GO" id="GO:0042733">
    <property type="term" value="P:embryonic digit morphogenesis"/>
    <property type="evidence" value="ECO:0007669"/>
    <property type="project" value="Ensembl"/>
</dbReference>
<dbReference type="GO" id="GO:0035115">
    <property type="term" value="P:embryonic forelimb morphogenesis"/>
    <property type="evidence" value="ECO:0007669"/>
    <property type="project" value="Ensembl"/>
</dbReference>
<dbReference type="GO" id="GO:0035116">
    <property type="term" value="P:embryonic hindlimb morphogenesis"/>
    <property type="evidence" value="ECO:0007669"/>
    <property type="project" value="Ensembl"/>
</dbReference>
<dbReference type="GO" id="GO:0036023">
    <property type="term" value="P:embryonic skeletal limb joint morphogenesis"/>
    <property type="evidence" value="ECO:0007669"/>
    <property type="project" value="Ensembl"/>
</dbReference>
<dbReference type="GO" id="GO:0008406">
    <property type="term" value="P:gonad development"/>
    <property type="evidence" value="ECO:0007669"/>
    <property type="project" value="Ensembl"/>
</dbReference>
<dbReference type="GO" id="GO:0007507">
    <property type="term" value="P:heart development"/>
    <property type="evidence" value="ECO:0000250"/>
    <property type="project" value="UniProtKB"/>
</dbReference>
<dbReference type="GO" id="GO:0048389">
    <property type="term" value="P:intermediate mesoderm development"/>
    <property type="evidence" value="ECO:0007669"/>
    <property type="project" value="Ensembl"/>
</dbReference>
<dbReference type="GO" id="GO:0072143">
    <property type="term" value="P:mesangial cell development"/>
    <property type="evidence" value="ECO:0000250"/>
    <property type="project" value="UniProtKB"/>
</dbReference>
<dbReference type="GO" id="GO:0072180">
    <property type="term" value="P:mesonephric duct morphogenesis"/>
    <property type="evidence" value="ECO:0007669"/>
    <property type="project" value="Ensembl"/>
</dbReference>
<dbReference type="GO" id="GO:0090094">
    <property type="term" value="P:metanephric cap mesenchymal cell proliferation involved in metanephros development"/>
    <property type="evidence" value="ECO:0007669"/>
    <property type="project" value="Ensembl"/>
</dbReference>
<dbReference type="GO" id="GO:0072207">
    <property type="term" value="P:metanephric epithelium development"/>
    <property type="evidence" value="ECO:0000250"/>
    <property type="project" value="UniProtKB"/>
</dbReference>
<dbReference type="GO" id="GO:0072239">
    <property type="term" value="P:metanephric glomerulus vasculature development"/>
    <property type="evidence" value="ECO:0000250"/>
    <property type="project" value="UniProtKB"/>
</dbReference>
<dbReference type="GO" id="GO:0072259">
    <property type="term" value="P:metanephric interstitial fibroblast development"/>
    <property type="evidence" value="ECO:0000250"/>
    <property type="project" value="UniProtKB"/>
</dbReference>
<dbReference type="GO" id="GO:0072162">
    <property type="term" value="P:metanephric mesenchymal cell differentiation"/>
    <property type="evidence" value="ECO:0000250"/>
    <property type="project" value="UniProtKB"/>
</dbReference>
<dbReference type="GO" id="GO:0072075">
    <property type="term" value="P:metanephric mesenchyme development"/>
    <property type="evidence" value="ECO:0000250"/>
    <property type="project" value="UniProtKB"/>
</dbReference>
<dbReference type="GO" id="GO:0072234">
    <property type="term" value="P:metanephric nephron tubule development"/>
    <property type="evidence" value="ECO:0000250"/>
    <property type="project" value="UniProtKB"/>
</dbReference>
<dbReference type="GO" id="GO:0072208">
    <property type="term" value="P:metanephric smooth muscle tissue development"/>
    <property type="evidence" value="ECO:0000250"/>
    <property type="project" value="UniProtKB"/>
</dbReference>
<dbReference type="GO" id="GO:0042474">
    <property type="term" value="P:middle ear morphogenesis"/>
    <property type="evidence" value="ECO:0007669"/>
    <property type="project" value="Ensembl"/>
</dbReference>
<dbReference type="GO" id="GO:0043066">
    <property type="term" value="P:negative regulation of apoptotic process"/>
    <property type="evidence" value="ECO:0007669"/>
    <property type="project" value="Ensembl"/>
</dbReference>
<dbReference type="GO" id="GO:0072183">
    <property type="term" value="P:negative regulation of nephron tubule epithelial cell differentiation"/>
    <property type="evidence" value="ECO:0000250"/>
    <property type="project" value="UniProtKB"/>
</dbReference>
<dbReference type="GO" id="GO:0000122">
    <property type="term" value="P:negative regulation of transcription by RNA polymerase II"/>
    <property type="evidence" value="ECO:0000318"/>
    <property type="project" value="GO_Central"/>
</dbReference>
<dbReference type="GO" id="GO:0042476">
    <property type="term" value="P:odontogenesis"/>
    <property type="evidence" value="ECO:0007669"/>
    <property type="project" value="Ensembl"/>
</dbReference>
<dbReference type="GO" id="GO:0072268">
    <property type="term" value="P:pattern specification involved in metanephros development"/>
    <property type="evidence" value="ECO:0007669"/>
    <property type="project" value="Ensembl"/>
</dbReference>
<dbReference type="GO" id="GO:0007389">
    <property type="term" value="P:pattern specification process"/>
    <property type="evidence" value="ECO:0000318"/>
    <property type="project" value="GO_Central"/>
</dbReference>
<dbReference type="GO" id="GO:0030501">
    <property type="term" value="P:positive regulation of bone mineralization"/>
    <property type="evidence" value="ECO:0007669"/>
    <property type="project" value="Ensembl"/>
</dbReference>
<dbReference type="GO" id="GO:0050679">
    <property type="term" value="P:positive regulation of epithelial cell proliferation"/>
    <property type="evidence" value="ECO:0000250"/>
    <property type="project" value="UniProtKB"/>
</dbReference>
<dbReference type="GO" id="GO:2000543">
    <property type="term" value="P:positive regulation of gastrulation"/>
    <property type="evidence" value="ECO:0000250"/>
    <property type="project" value="UniProtKB"/>
</dbReference>
<dbReference type="GO" id="GO:0010628">
    <property type="term" value="P:positive regulation of gene expression"/>
    <property type="evidence" value="ECO:0007669"/>
    <property type="project" value="Ensembl"/>
</dbReference>
<dbReference type="GO" id="GO:0045944">
    <property type="term" value="P:positive regulation of transcription by RNA polymerase II"/>
    <property type="evidence" value="ECO:0007669"/>
    <property type="project" value="Ensembl"/>
</dbReference>
<dbReference type="GO" id="GO:0048793">
    <property type="term" value="P:pronephros development"/>
    <property type="evidence" value="ECO:0000250"/>
    <property type="project" value="UniProtKB"/>
</dbReference>
<dbReference type="GO" id="GO:0072184">
    <property type="term" value="P:renal vesicle progenitor cell differentiation"/>
    <property type="evidence" value="ECO:0000250"/>
    <property type="project" value="UniProtKB"/>
</dbReference>
<dbReference type="GO" id="GO:0060021">
    <property type="term" value="P:roof of mouth development"/>
    <property type="evidence" value="ECO:0007669"/>
    <property type="project" value="Ensembl"/>
</dbReference>
<dbReference type="GO" id="GO:0035725">
    <property type="term" value="P:sodium ion transmembrane transport"/>
    <property type="evidence" value="ECO:0007669"/>
    <property type="project" value="Ensembl"/>
</dbReference>
<dbReference type="GO" id="GO:0072168">
    <property type="term" value="P:specification of anterior mesonephric tubule identity"/>
    <property type="evidence" value="ECO:0000250"/>
    <property type="project" value="UniProtKB"/>
</dbReference>
<dbReference type="GO" id="GO:0072169">
    <property type="term" value="P:specification of posterior mesonephric tubule identity"/>
    <property type="evidence" value="ECO:0000250"/>
    <property type="project" value="UniProtKB"/>
</dbReference>
<dbReference type="GO" id="GO:0048863">
    <property type="term" value="P:stem cell differentiation"/>
    <property type="evidence" value="ECO:0000250"/>
    <property type="project" value="UniProtKB"/>
</dbReference>
<dbReference type="GO" id="GO:0072190">
    <property type="term" value="P:ureter urothelium development"/>
    <property type="evidence" value="ECO:0000250"/>
    <property type="project" value="UniProtKB"/>
</dbReference>
<dbReference type="GO" id="GO:0001657">
    <property type="term" value="P:ureteric bud development"/>
    <property type="evidence" value="ECO:0007669"/>
    <property type="project" value="Ensembl"/>
</dbReference>
<dbReference type="GO" id="GO:0001655">
    <property type="term" value="P:urogenital system development"/>
    <property type="evidence" value="ECO:0000250"/>
    <property type="project" value="UniProtKB"/>
</dbReference>
<dbReference type="FunFam" id="3.30.160.60:FF:000254">
    <property type="entry name" value="Odd-skipped related transciption factor 1"/>
    <property type="match status" value="1"/>
</dbReference>
<dbReference type="FunFam" id="3.30.160.60:FF:000090">
    <property type="entry name" value="Odd-skipped-related transciption factor 2"/>
    <property type="match status" value="1"/>
</dbReference>
<dbReference type="FunFam" id="3.30.160.60:FF:000311">
    <property type="entry name" value="protein odd-skipped-related 2 isoform X1"/>
    <property type="match status" value="1"/>
</dbReference>
<dbReference type="Gene3D" id="3.30.160.60">
    <property type="entry name" value="Classic Zinc Finger"/>
    <property type="match status" value="3"/>
</dbReference>
<dbReference type="InterPro" id="IPR050717">
    <property type="entry name" value="C2H2-ZF_Transcription_Reg"/>
</dbReference>
<dbReference type="InterPro" id="IPR036236">
    <property type="entry name" value="Znf_C2H2_sf"/>
</dbReference>
<dbReference type="InterPro" id="IPR013087">
    <property type="entry name" value="Znf_C2H2_type"/>
</dbReference>
<dbReference type="PANTHER" id="PTHR14196">
    <property type="entry name" value="ODD-SKIPPED - RELATED"/>
    <property type="match status" value="1"/>
</dbReference>
<dbReference type="PANTHER" id="PTHR14196:SF5">
    <property type="entry name" value="PROTEIN ODD-SKIPPED-RELATED 1"/>
    <property type="match status" value="1"/>
</dbReference>
<dbReference type="Pfam" id="PF00096">
    <property type="entry name" value="zf-C2H2"/>
    <property type="match status" value="3"/>
</dbReference>
<dbReference type="SMART" id="SM00355">
    <property type="entry name" value="ZnF_C2H2"/>
    <property type="match status" value="3"/>
</dbReference>
<dbReference type="SUPFAM" id="SSF57667">
    <property type="entry name" value="beta-beta-alpha zinc fingers"/>
    <property type="match status" value="2"/>
</dbReference>
<dbReference type="PROSITE" id="PS00028">
    <property type="entry name" value="ZINC_FINGER_C2H2_1"/>
    <property type="match status" value="3"/>
</dbReference>
<dbReference type="PROSITE" id="PS50157">
    <property type="entry name" value="ZINC_FINGER_C2H2_2"/>
    <property type="match status" value="3"/>
</dbReference>
<name>OSR1_BOVIN</name>
<protein>
    <recommendedName>
        <fullName>Protein odd-skipped-related 1</fullName>
    </recommendedName>
</protein>
<feature type="chain" id="PRO_0000402804" description="Protein odd-skipped-related 1">
    <location>
        <begin position="1"/>
        <end position="267"/>
    </location>
</feature>
<feature type="zinc finger region" description="C2H2-type 1" evidence="3">
    <location>
        <begin position="176"/>
        <end position="198"/>
    </location>
</feature>
<feature type="zinc finger region" description="C2H2-type 2" evidence="3">
    <location>
        <begin position="204"/>
        <end position="226"/>
    </location>
</feature>
<feature type="zinc finger region" description="C2H2-type 3" evidence="3">
    <location>
        <begin position="232"/>
        <end position="254"/>
    </location>
</feature>
<feature type="region of interest" description="Disordered" evidence="4">
    <location>
        <begin position="130"/>
        <end position="150"/>
    </location>
</feature>
<feature type="compositionally biased region" description="Gly residues" evidence="4">
    <location>
        <begin position="138"/>
        <end position="149"/>
    </location>
</feature>
<feature type="modified residue" description="Asymmetric dimethylarginine" evidence="2">
    <location>
        <position position="117"/>
    </location>
</feature>
<sequence>MGSKTLPAPVPIHPSLQLTNYSFLQAVNGLPTVPSDHLPNLYGFSALHAVHLHQWTLGYPAMHLPRSSFSKVPGAVSSLVDARFQLPAFPWFPHVIQPKPEITAGGSGPAALKTKPRFDFANLALAATQEDPSKLGRGEGPGSPAGGLGALLDVTKLSPEKKPTRGRLPSKTKKEFVCKFCGRHFTKSYNLLIHERTHTDERPYTCDICHKAFRRQDHLRDHRYIHSKEKPFKCQECGKGFCQSRTLAVHKTLHSQVKELKTSKIKC</sequence>
<proteinExistence type="evidence at transcript level"/>
<organism>
    <name type="scientific">Bos taurus</name>
    <name type="common">Bovine</name>
    <dbReference type="NCBI Taxonomy" id="9913"/>
    <lineage>
        <taxon>Eukaryota</taxon>
        <taxon>Metazoa</taxon>
        <taxon>Chordata</taxon>
        <taxon>Craniata</taxon>
        <taxon>Vertebrata</taxon>
        <taxon>Euteleostomi</taxon>
        <taxon>Mammalia</taxon>
        <taxon>Eutheria</taxon>
        <taxon>Laurasiatheria</taxon>
        <taxon>Artiodactyla</taxon>
        <taxon>Ruminantia</taxon>
        <taxon>Pecora</taxon>
        <taxon>Bovidae</taxon>
        <taxon>Bovinae</taxon>
        <taxon>Bos</taxon>
    </lineage>
</organism>
<reference key="1">
    <citation type="submission" date="2006-09" db="EMBL/GenBank/DDBJ databases">
        <authorList>
            <consortium name="NIH - Mammalian Gene Collection (MGC) project"/>
        </authorList>
    </citation>
    <scope>NUCLEOTIDE SEQUENCE [LARGE SCALE MRNA]</scope>
    <source>
        <strain>Hereford</strain>
        <tissue>Fetal spinal cord</tissue>
    </source>
</reference>
<accession>Q08DS3</accession>
<keyword id="KW-0479">Metal-binding</keyword>
<keyword id="KW-0488">Methylation</keyword>
<keyword id="KW-0539">Nucleus</keyword>
<keyword id="KW-1185">Reference proteome</keyword>
<keyword id="KW-0677">Repeat</keyword>
<keyword id="KW-0804">Transcription</keyword>
<keyword id="KW-0805">Transcription regulation</keyword>
<keyword id="KW-0862">Zinc</keyword>
<keyword id="KW-0863">Zinc-finger</keyword>
<comment type="function">
    <text evidence="1">Transcription factor that plays a role in the regulation of embryonic heart and urogenital development.</text>
</comment>
<comment type="subcellular location">
    <subcellularLocation>
        <location evidence="5">Nucleus</location>
    </subcellularLocation>
</comment>
<comment type="similarity">
    <text evidence="5">Belongs to the Odd C2H2-type zinc-finger protein family.</text>
</comment>
<comment type="sequence caution" evidence="5">
    <conflict type="frameshift">
        <sequence resource="EMBL-CDS" id="AAI23592"/>
    </conflict>
</comment>